<protein>
    <recommendedName>
        <fullName>R-spondin-2</fullName>
    </recommendedName>
    <alternativeName>
        <fullName>Roof plate-specific spondin-2</fullName>
    </alternativeName>
    <alternativeName>
        <fullName>XRspo2</fullName>
    </alternativeName>
</protein>
<organism>
    <name type="scientific">Xenopus laevis</name>
    <name type="common">African clawed frog</name>
    <dbReference type="NCBI Taxonomy" id="8355"/>
    <lineage>
        <taxon>Eukaryota</taxon>
        <taxon>Metazoa</taxon>
        <taxon>Chordata</taxon>
        <taxon>Craniata</taxon>
        <taxon>Vertebrata</taxon>
        <taxon>Euteleostomi</taxon>
        <taxon>Amphibia</taxon>
        <taxon>Batrachia</taxon>
        <taxon>Anura</taxon>
        <taxon>Pipoidea</taxon>
        <taxon>Pipidae</taxon>
        <taxon>Xenopodinae</taxon>
        <taxon>Xenopus</taxon>
        <taxon>Xenopus</taxon>
    </lineage>
</organism>
<dbReference type="EMBL" id="AY753198">
    <property type="protein sequence ID" value="AAV31037.1"/>
    <property type="molecule type" value="mRNA"/>
</dbReference>
<dbReference type="RefSeq" id="NP_001088999.1">
    <property type="nucleotide sequence ID" value="NM_001095530.1"/>
</dbReference>
<dbReference type="RefSeq" id="XP_018122151.1">
    <property type="nucleotide sequence ID" value="XM_018266662.1"/>
</dbReference>
<dbReference type="SMR" id="Q5UE90"/>
<dbReference type="BioGRID" id="106463">
    <property type="interactions" value="2"/>
</dbReference>
<dbReference type="GlyCosmos" id="Q5UE90">
    <property type="glycosylation" value="1 site, No reported glycans"/>
</dbReference>
<dbReference type="GeneID" id="496383"/>
<dbReference type="KEGG" id="xla:496383"/>
<dbReference type="AGR" id="Xenbase:XB-GENE-946240"/>
<dbReference type="CTD" id="496383"/>
<dbReference type="Xenbase" id="XB-GENE-946240">
    <property type="gene designation" value="rspo2.L"/>
</dbReference>
<dbReference type="OMA" id="HGECLHA"/>
<dbReference type="OrthoDB" id="10257656at2759"/>
<dbReference type="Proteomes" id="UP000186698">
    <property type="component" value="Chromosome 6L"/>
</dbReference>
<dbReference type="Bgee" id="496383">
    <property type="expression patterns" value="Expressed in lung and 9 other cell types or tissues"/>
</dbReference>
<dbReference type="GO" id="GO:0005615">
    <property type="term" value="C:extracellular space"/>
    <property type="evidence" value="ECO:0000318"/>
    <property type="project" value="GO_Central"/>
</dbReference>
<dbReference type="GO" id="GO:0070700">
    <property type="term" value="F:BMP receptor binding"/>
    <property type="evidence" value="ECO:0000318"/>
    <property type="project" value="GO_Central"/>
</dbReference>
<dbReference type="GO" id="GO:0008201">
    <property type="term" value="F:heparin binding"/>
    <property type="evidence" value="ECO:0007669"/>
    <property type="project" value="UniProtKB-KW"/>
</dbReference>
<dbReference type="GO" id="GO:0030509">
    <property type="term" value="P:BMP signaling pathway"/>
    <property type="evidence" value="ECO:0000315"/>
    <property type="project" value="Xenbase"/>
</dbReference>
<dbReference type="GO" id="GO:0009950">
    <property type="term" value="P:dorsal/ventral axis specification"/>
    <property type="evidence" value="ECO:0000315"/>
    <property type="project" value="Xenbase"/>
</dbReference>
<dbReference type="GO" id="GO:0090263">
    <property type="term" value="P:positive regulation of canonical Wnt signaling pathway"/>
    <property type="evidence" value="ECO:0000318"/>
    <property type="project" value="GO_Central"/>
</dbReference>
<dbReference type="GO" id="GO:0016055">
    <property type="term" value="P:Wnt signaling pathway"/>
    <property type="evidence" value="ECO:0007669"/>
    <property type="project" value="UniProtKB-KW"/>
</dbReference>
<dbReference type="CDD" id="cd00064">
    <property type="entry name" value="FU"/>
    <property type="match status" value="1"/>
</dbReference>
<dbReference type="FunFam" id="2.20.100.10:FF:000028">
    <property type="entry name" value="R-spondin 2"/>
    <property type="match status" value="1"/>
</dbReference>
<dbReference type="FunFam" id="2.10.220.10:FF:000012">
    <property type="entry name" value="R-spondin 4"/>
    <property type="match status" value="1"/>
</dbReference>
<dbReference type="Gene3D" id="2.10.220.10">
    <property type="entry name" value="Hormone Receptor, Insulin-like Growth Factor Receptor 1, Chain A, domain 2"/>
    <property type="match status" value="1"/>
</dbReference>
<dbReference type="Gene3D" id="2.20.100.10">
    <property type="entry name" value="Thrombospondin type-1 (TSP1) repeat"/>
    <property type="match status" value="1"/>
</dbReference>
<dbReference type="InterPro" id="IPR006212">
    <property type="entry name" value="Furin_repeat"/>
</dbReference>
<dbReference type="InterPro" id="IPR009030">
    <property type="entry name" value="Growth_fac_rcpt_cys_sf"/>
</dbReference>
<dbReference type="InterPro" id="IPR051514">
    <property type="entry name" value="R-spondin"/>
</dbReference>
<dbReference type="InterPro" id="IPR043601">
    <property type="entry name" value="Rspo_Fu-CRD_dom"/>
</dbReference>
<dbReference type="InterPro" id="IPR000884">
    <property type="entry name" value="TSP1_rpt"/>
</dbReference>
<dbReference type="InterPro" id="IPR036383">
    <property type="entry name" value="TSP1_rpt_sf"/>
</dbReference>
<dbReference type="InterPro" id="IPR044004">
    <property type="entry name" value="TSP1_spondin_dom"/>
</dbReference>
<dbReference type="PANTHER" id="PTHR46987">
    <property type="entry name" value="NEUROHYPOPHYSIAL HORMONES, N-TERMINAL DOMAIN CONTAINING PROTEIN"/>
    <property type="match status" value="1"/>
</dbReference>
<dbReference type="PANTHER" id="PTHR46987:SF4">
    <property type="entry name" value="R-SPONDIN-2"/>
    <property type="match status" value="1"/>
</dbReference>
<dbReference type="Pfam" id="PF15913">
    <property type="entry name" value="Furin-like_2"/>
    <property type="match status" value="1"/>
</dbReference>
<dbReference type="Pfam" id="PF19028">
    <property type="entry name" value="TSP1_spondin"/>
    <property type="match status" value="1"/>
</dbReference>
<dbReference type="SMART" id="SM00261">
    <property type="entry name" value="FU"/>
    <property type="match status" value="2"/>
</dbReference>
<dbReference type="SMART" id="SM00209">
    <property type="entry name" value="TSP1"/>
    <property type="match status" value="1"/>
</dbReference>
<dbReference type="SUPFAM" id="SSF57184">
    <property type="entry name" value="Growth factor receptor domain"/>
    <property type="match status" value="1"/>
</dbReference>
<dbReference type="SUPFAM" id="SSF82895">
    <property type="entry name" value="TSP-1 type 1 repeat"/>
    <property type="match status" value="1"/>
</dbReference>
<dbReference type="PROSITE" id="PS50092">
    <property type="entry name" value="TSP1"/>
    <property type="match status" value="1"/>
</dbReference>
<keyword id="KW-0217">Developmental protein</keyword>
<keyword id="KW-1015">Disulfide bond</keyword>
<keyword id="KW-0325">Glycoprotein</keyword>
<keyword id="KW-0358">Heparin-binding</keyword>
<keyword id="KW-1185">Reference proteome</keyword>
<keyword id="KW-0964">Secreted</keyword>
<keyword id="KW-0716">Sensory transduction</keyword>
<keyword id="KW-0732">Signal</keyword>
<keyword id="KW-0879">Wnt signaling pathway</keyword>
<reference key="1">
    <citation type="journal article" date="2004" name="Dev. Cell">
        <title>R-Spondin2 is a secreted activator of Wnt/beta-catenin signaling and is required for Xenopus myogenesis.</title>
        <authorList>
            <person name="Kazanskaya O."/>
            <person name="Glinka A."/>
            <person name="del Barco Barrantes I."/>
            <person name="Stannek P."/>
            <person name="Niehrs C."/>
            <person name="Wu W."/>
        </authorList>
    </citation>
    <scope>NUCLEOTIDE SEQUENCE [MRNA]</scope>
    <scope>FUNCTION</scope>
    <scope>SUBCELLULAR LOCATION</scope>
    <scope>DEVELOPMENTAL STAGE</scope>
    <scope>INDUCTION</scope>
    <scope>DOMAIN</scope>
    <source>
        <tissue>Eye</tissue>
    </source>
</reference>
<evidence type="ECO:0000250" key="1"/>
<evidence type="ECO:0000250" key="2">
    <source>
        <dbReference type="UniProtKB" id="Q5M7L6"/>
    </source>
</evidence>
<evidence type="ECO:0000250" key="3">
    <source>
        <dbReference type="UniProtKB" id="Q6UXX9"/>
    </source>
</evidence>
<evidence type="ECO:0000255" key="4"/>
<evidence type="ECO:0000255" key="5">
    <source>
        <dbReference type="PROSITE-ProRule" id="PRU00210"/>
    </source>
</evidence>
<evidence type="ECO:0000256" key="6">
    <source>
        <dbReference type="SAM" id="MobiDB-lite"/>
    </source>
</evidence>
<evidence type="ECO:0000269" key="7">
    <source>
    </source>
</evidence>
<evidence type="ECO:0000305" key="8"/>
<name>RSPO2_XENLA</name>
<feature type="signal peptide" evidence="4">
    <location>
        <begin position="1"/>
        <end position="21"/>
    </location>
</feature>
<feature type="chain" id="PRO_0000234441" description="R-spondin-2">
    <location>
        <begin position="22"/>
        <end position="243"/>
    </location>
</feature>
<feature type="repeat" description="FU">
    <location>
        <begin position="90"/>
        <end position="134"/>
    </location>
</feature>
<feature type="domain" description="TSP type-1" evidence="5">
    <location>
        <begin position="144"/>
        <end position="204"/>
    </location>
</feature>
<feature type="region of interest" description="Disordered" evidence="6">
    <location>
        <begin position="204"/>
        <end position="243"/>
    </location>
</feature>
<feature type="compositionally biased region" description="Basic residues" evidence="6">
    <location>
        <begin position="204"/>
        <end position="224"/>
    </location>
</feature>
<feature type="glycosylation site" description="N-linked (GlcNAc...) asparagine" evidence="4">
    <location>
        <position position="160"/>
    </location>
</feature>
<feature type="disulfide bond" evidence="5">
    <location>
        <begin position="40"/>
        <end position="46"/>
    </location>
</feature>
<feature type="disulfide bond" evidence="5">
    <location>
        <begin position="43"/>
        <end position="52"/>
    </location>
</feature>
<feature type="disulfide bond" evidence="5">
    <location>
        <begin position="55"/>
        <end position="74"/>
    </location>
</feature>
<feature type="disulfide bond" evidence="5">
    <location>
        <begin position="78"/>
        <end position="93"/>
    </location>
</feature>
<feature type="disulfide bond" evidence="5">
    <location>
        <begin position="96"/>
        <end position="104"/>
    </location>
</feature>
<feature type="disulfide bond" evidence="5">
    <location>
        <begin position="101"/>
        <end position="110"/>
    </location>
</feature>
<feature type="disulfide bond" evidence="5">
    <location>
        <begin position="113"/>
        <end position="124"/>
    </location>
</feature>
<feature type="disulfide bond" evidence="5">
    <location>
        <begin position="128"/>
        <end position="141"/>
    </location>
</feature>
<feature type="disulfide bond" evidence="5">
    <location>
        <begin position="145"/>
        <end position="187"/>
    </location>
</feature>
<feature type="disulfide bond" evidence="5">
    <location>
        <begin position="156"/>
        <end position="163"/>
    </location>
</feature>
<feature type="disulfide bond" evidence="5">
    <location>
        <begin position="196"/>
        <end position="203"/>
    </location>
</feature>
<sequence length="243" mass="27879">MQFQLFSFALIILNCVDYSHCQASRWRRSKRASYGTNPICKGCLSCSKDNGCLRCQPKLFFFLRREGMRQYGECLQSCPPGYYGVRGPDMNRCSRCRIENCDSCFSRDFCIKCKSGFYSLKGQCFEECPEGFAPLDDTMVCVDGCEVGPWSEWGTCSRNNRTCGFKWGLETRTRQIVKKPAKDTIPCPTIAESRRCKMAIRHCPGGKRTTKKKDKRNKKKKKKLLERAQEQHSVVLATDRSSQ</sequence>
<gene>
    <name type="primary">rspo2</name>
</gene>
<accession>Q5UE90</accession>
<proteinExistence type="evidence at transcript level"/>
<comment type="function">
    <text evidence="2 3 7">Activator of the canonical Wnt signaling pathway by acting as a ligand for lgr4-6 receptors. Upon binding to lgr4-6 (lgr4, lgr5 or lgr6), lgr4-6 associate with phosphorylated lrp6 and frizzled receptors that are activated by extracellular Wnt receptors, triggering the canonical Wnt signaling pathway to increase expression of target genes. Acts both in the canonical Wnt/beta-catenin-dependent pathway and in non-canonical Wnt signaling pathway (By similarity). Activates neural markers and promotes muscle formation. Overexpression blocks activin, nodal and BMP4 signaling, suggesting that it may negatively regulate the TGF-beta pathway (PubMed:15469841). During embryonic development, plays a crucial role in limb specification, amplifying the Wnt signaling pathway independently of LGR4-6 receptors, possibly by acting as a direct antagonistic ligand to RNF43 and ZNRF3, hence governing the number of limbs an embryo should form (By similarity).</text>
</comment>
<comment type="subunit">
    <text evidence="1">Binds heparin.</text>
</comment>
<comment type="subcellular location">
    <subcellularLocation>
        <location evidence="7">Secreted</location>
    </subcellularLocation>
</comment>
<comment type="developmental stage">
    <text evidence="7">Expressed from early gastrula stage and remains constant throughout neurulation and organogenesis. Expressed throughout the ectoderm of early gastrula. During gastrulation, it is detected in the marginal zone in both deep and superficial layers but is excluded from the Speemann organizer. At late gastrula, it persists in lateral plate mesoderm and becomes detectable in the anterior neural plate. At stage 15, it is expressed in 2 longitudinal stripes along the neural plate, in the anterior neural plate, and in lateral and posterior mesoderm. At tailbud stage, it is restricted in several regions of the brain, including diencephalon and midbrain-hindbrain boundary, pronephros and dorsal neural tube. Also detected in the dorsal- and ventral-most portions of somites, the drosal fin and the proctodeum. Expression in the brain of late tadpoles is mainly restricted to diencephalon, including the zona limitans intrahalamica.</text>
</comment>
<comment type="induction">
    <text evidence="7">By Wnt proteins.</text>
</comment>
<comment type="domain">
    <text evidence="7">The FU repeat is required for activation and stabilization of beta-catenin.</text>
</comment>
<comment type="similarity">
    <text evidence="8">Belongs to the R-spondin family.</text>
</comment>